<organism>
    <name type="scientific">Meleagris gallopavo</name>
    <name type="common">Wild turkey</name>
    <dbReference type="NCBI Taxonomy" id="9103"/>
    <lineage>
        <taxon>Eukaryota</taxon>
        <taxon>Metazoa</taxon>
        <taxon>Chordata</taxon>
        <taxon>Craniata</taxon>
        <taxon>Vertebrata</taxon>
        <taxon>Euteleostomi</taxon>
        <taxon>Archelosauria</taxon>
        <taxon>Archosauria</taxon>
        <taxon>Dinosauria</taxon>
        <taxon>Saurischia</taxon>
        <taxon>Theropoda</taxon>
        <taxon>Coelurosauria</taxon>
        <taxon>Aves</taxon>
        <taxon>Neognathae</taxon>
        <taxon>Galloanserae</taxon>
        <taxon>Galliformes</taxon>
        <taxon>Phasianidae</taxon>
        <taxon>Meleagridinae</taxon>
        <taxon>Meleagris</taxon>
    </lineage>
</organism>
<sequence>MEHRGTSPLLLALALLSALCWRARALPPRGAAFPAVPRLGNRLPFDAASESDRAHGSLKSESDILQNTLPENEKFYFDLSRIIDRNDRHADGIFTTVYSHLLAKLAVKRYLHSLIRKRVSSQDSPVKRHSDAVFTDNYSRFRKQMAVKKYLNSVLTGKRSQEELNPAKLADEAEILEPSFSENYDDVSVDELLSHLPLDL</sequence>
<keyword id="KW-0027">Amidation</keyword>
<keyword id="KW-0165">Cleavage on pair of basic residues</keyword>
<keyword id="KW-0372">Hormone</keyword>
<keyword id="KW-1185">Reference proteome</keyword>
<keyword id="KW-0964">Secreted</keyword>
<keyword id="KW-0732">Signal</keyword>
<protein>
    <recommendedName>
        <fullName>VIP peptides</fullName>
    </recommendedName>
    <component>
        <recommendedName>
            <fullName>Intestinal peptide PHI-27-like</fullName>
        </recommendedName>
    </component>
    <component>
        <recommendedName>
            <fullName>Vasoactive intestinal peptide</fullName>
            <shortName>VIP</shortName>
        </recommendedName>
        <alternativeName>
            <fullName>Vasoactive intestinal polypeptide</fullName>
        </alternativeName>
    </component>
</protein>
<reference key="1">
    <citation type="journal article" date="1995" name="Endocrinology">
        <title>Tissue-specific alternative splicing of turkey preprovasoactive intestinal peptide messenger ribonucleic acid, its regulation, and correlation with prolactin secretion.</title>
        <authorList>
            <person name="You S."/>
            <person name="Silsby J.L."/>
            <person name="Farris J.A."/>
            <person name="Foster D.N."/>
            <person name="el Halawani M.E."/>
        </authorList>
    </citation>
    <scope>NUCLEOTIDE SEQUENCE [MRNA]</scope>
    <source>
        <strain>Nicholas white</strain>
        <tissue>Hypothalamus</tissue>
    </source>
</reference>
<comment type="function">
    <molecule>Vasoactive intestinal peptide</molecule>
    <text evidence="2">VIP is a neuropeptide involved in a diverse array of physiological processes through activating the PACAP subfamily of class B1 G protein-coupled receptors: VIP receptor 1 (VPR1) and VIP receptor 2 (VPR2). Abundantly expressed throughout the CNS and peripheral nervous systems where they primarily exert neuroprotective and immune modulatory roles (By similarity). Also causes vasodilation, lowers arterial blood pressure, stimulates myocardial contractility, increases glycogenolysis and relaxes the smooth muscle of trachea, stomach and gall bladder (By similarity).</text>
</comment>
<comment type="function">
    <text evidence="2">PHM-27 is a bioactive form from proteolysis of the same precursor protein, that causes vasodilation.</text>
</comment>
<comment type="subcellular location">
    <subcellularLocation>
        <location>Secreted</location>
    </subcellularLocation>
</comment>
<comment type="similarity">
    <text evidence="4">Belongs to the glucagon family.</text>
</comment>
<dbReference type="EMBL" id="L36641">
    <property type="protein sequence ID" value="AAA92866.1"/>
    <property type="molecule type" value="mRNA"/>
</dbReference>
<dbReference type="SMR" id="P45644"/>
<dbReference type="FunCoup" id="P45644">
    <property type="interactions" value="1"/>
</dbReference>
<dbReference type="InParanoid" id="P45644"/>
<dbReference type="OrthoDB" id="8795594at2759"/>
<dbReference type="Proteomes" id="UP000001645">
    <property type="component" value="Unplaced"/>
</dbReference>
<dbReference type="GO" id="GO:0005576">
    <property type="term" value="C:extracellular region"/>
    <property type="evidence" value="ECO:0007669"/>
    <property type="project" value="UniProtKB-SubCell"/>
</dbReference>
<dbReference type="GO" id="GO:0043005">
    <property type="term" value="C:neuron projection"/>
    <property type="evidence" value="ECO:0007669"/>
    <property type="project" value="TreeGrafter"/>
</dbReference>
<dbReference type="GO" id="GO:0005184">
    <property type="term" value="F:neuropeptide hormone activity"/>
    <property type="evidence" value="ECO:0000250"/>
    <property type="project" value="UniProtKB"/>
</dbReference>
<dbReference type="GO" id="GO:0051428">
    <property type="term" value="F:peptide hormone receptor binding"/>
    <property type="evidence" value="ECO:0007669"/>
    <property type="project" value="TreeGrafter"/>
</dbReference>
<dbReference type="GO" id="GO:0031891">
    <property type="term" value="F:type 1 vasoactive intestinal polypeptide receptor binding"/>
    <property type="evidence" value="ECO:0000250"/>
    <property type="project" value="UniProtKB"/>
</dbReference>
<dbReference type="GO" id="GO:0007189">
    <property type="term" value="P:adenylate cyclase-activating G protein-coupled receptor signaling pathway"/>
    <property type="evidence" value="ECO:0000250"/>
    <property type="project" value="UniProtKB"/>
</dbReference>
<dbReference type="GO" id="GO:0048242">
    <property type="term" value="P:epinephrine secretion"/>
    <property type="evidence" value="ECO:0007669"/>
    <property type="project" value="TreeGrafter"/>
</dbReference>
<dbReference type="GO" id="GO:0009648">
    <property type="term" value="P:photoperiodism"/>
    <property type="evidence" value="ECO:0000304"/>
    <property type="project" value="AgBase"/>
</dbReference>
<dbReference type="GO" id="GO:0032880">
    <property type="term" value="P:regulation of protein localization"/>
    <property type="evidence" value="ECO:0007669"/>
    <property type="project" value="TreeGrafter"/>
</dbReference>
<dbReference type="Gene3D" id="6.10.250.590">
    <property type="match status" value="1"/>
</dbReference>
<dbReference type="InterPro" id="IPR000532">
    <property type="entry name" value="Glucagon_GIP_secretin_VIP"/>
</dbReference>
<dbReference type="InterPro" id="IPR046963">
    <property type="entry name" value="VIP/GHRH-like"/>
</dbReference>
<dbReference type="PANTHER" id="PTHR11213">
    <property type="entry name" value="GLUCAGON-FAMILY NEUROPEPTIDE"/>
    <property type="match status" value="1"/>
</dbReference>
<dbReference type="PANTHER" id="PTHR11213:SF5">
    <property type="entry name" value="VIP PEPTIDES"/>
    <property type="match status" value="1"/>
</dbReference>
<dbReference type="Pfam" id="PF00123">
    <property type="entry name" value="Hormone_2"/>
    <property type="match status" value="2"/>
</dbReference>
<dbReference type="SMART" id="SM00070">
    <property type="entry name" value="GLUCA"/>
    <property type="match status" value="2"/>
</dbReference>
<dbReference type="PROSITE" id="PS00260">
    <property type="entry name" value="GLUCAGON"/>
    <property type="match status" value="1"/>
</dbReference>
<name>VIP_MELGA</name>
<evidence type="ECO:0000250" key="1"/>
<evidence type="ECO:0000250" key="2">
    <source>
        <dbReference type="UniProtKB" id="P01282"/>
    </source>
</evidence>
<evidence type="ECO:0000255" key="3"/>
<evidence type="ECO:0000305" key="4"/>
<accession>P45644</accession>
<feature type="signal peptide" evidence="3">
    <location>
        <begin position="1"/>
        <end position="25"/>
    </location>
</feature>
<feature type="propeptide" id="PRO_0000011481">
    <location>
        <begin position="26"/>
        <end position="87"/>
    </location>
</feature>
<feature type="peptide" id="PRO_0000011482" description="Intestinal peptide PHI-27-like">
    <location>
        <begin position="89"/>
        <end position="115"/>
    </location>
</feature>
<feature type="propeptide" id="PRO_0000011483">
    <location>
        <begin position="119"/>
        <end position="126"/>
    </location>
</feature>
<feature type="peptide" id="PRO_0000011484" description="Vasoactive intestinal peptide">
    <location>
        <begin position="129"/>
        <end position="156"/>
    </location>
</feature>
<feature type="propeptide" id="PRO_0000011485">
    <location>
        <begin position="160"/>
        <end position="200"/>
    </location>
</feature>
<feature type="modified residue" description="Threonine amide" evidence="1">
    <location>
        <position position="156"/>
    </location>
</feature>
<gene>
    <name type="primary">VIP</name>
</gene>
<proteinExistence type="evidence at transcript level"/>